<protein>
    <recommendedName>
        <fullName evidence="1">Bifunctional purine biosynthesis protein PurH</fullName>
    </recommendedName>
    <domain>
        <recommendedName>
            <fullName evidence="1">Phosphoribosylaminoimidazolecarboxamide formyltransferase</fullName>
            <ecNumber evidence="1">2.1.2.3</ecNumber>
        </recommendedName>
        <alternativeName>
            <fullName evidence="1">AICAR transformylase</fullName>
        </alternativeName>
    </domain>
    <domain>
        <recommendedName>
            <fullName evidence="1">IMP cyclohydrolase</fullName>
            <ecNumber evidence="1">3.5.4.10</ecNumber>
        </recommendedName>
        <alternativeName>
            <fullName evidence="1">ATIC</fullName>
        </alternativeName>
        <alternativeName>
            <fullName evidence="1">IMP synthase</fullName>
        </alternativeName>
        <alternativeName>
            <fullName evidence="1">Inosinicase</fullName>
        </alternativeName>
    </domain>
</protein>
<proteinExistence type="inferred from homology"/>
<gene>
    <name evidence="1" type="primary">purH</name>
    <name type="ordered locus">BTH_I1250</name>
</gene>
<keyword id="KW-0378">Hydrolase</keyword>
<keyword id="KW-0511">Multifunctional enzyme</keyword>
<keyword id="KW-0658">Purine biosynthesis</keyword>
<keyword id="KW-0808">Transferase</keyword>
<evidence type="ECO:0000255" key="1">
    <source>
        <dbReference type="HAMAP-Rule" id="MF_00139"/>
    </source>
</evidence>
<evidence type="ECO:0000255" key="2">
    <source>
        <dbReference type="PROSITE-ProRule" id="PRU01202"/>
    </source>
</evidence>
<dbReference type="EC" id="2.1.2.3" evidence="1"/>
<dbReference type="EC" id="3.5.4.10" evidence="1"/>
<dbReference type="EMBL" id="CP000086">
    <property type="protein sequence ID" value="ABC38801.1"/>
    <property type="molecule type" value="Genomic_DNA"/>
</dbReference>
<dbReference type="RefSeq" id="WP_009889147.1">
    <property type="nucleotide sequence ID" value="NZ_CP008785.1"/>
</dbReference>
<dbReference type="SMR" id="Q2SZ52"/>
<dbReference type="GeneID" id="45120997"/>
<dbReference type="KEGG" id="bte:BTH_I1250"/>
<dbReference type="HOGENOM" id="CLU_016316_5_2_4"/>
<dbReference type="UniPathway" id="UPA00074">
    <property type="reaction ID" value="UER00133"/>
</dbReference>
<dbReference type="UniPathway" id="UPA00074">
    <property type="reaction ID" value="UER00135"/>
</dbReference>
<dbReference type="Proteomes" id="UP000001930">
    <property type="component" value="Chromosome I"/>
</dbReference>
<dbReference type="GO" id="GO:0005829">
    <property type="term" value="C:cytosol"/>
    <property type="evidence" value="ECO:0007669"/>
    <property type="project" value="TreeGrafter"/>
</dbReference>
<dbReference type="GO" id="GO:0003937">
    <property type="term" value="F:IMP cyclohydrolase activity"/>
    <property type="evidence" value="ECO:0007669"/>
    <property type="project" value="UniProtKB-UniRule"/>
</dbReference>
<dbReference type="GO" id="GO:0004643">
    <property type="term" value="F:phosphoribosylaminoimidazolecarboxamide formyltransferase activity"/>
    <property type="evidence" value="ECO:0007669"/>
    <property type="project" value="UniProtKB-UniRule"/>
</dbReference>
<dbReference type="GO" id="GO:0006189">
    <property type="term" value="P:'de novo' IMP biosynthetic process"/>
    <property type="evidence" value="ECO:0007669"/>
    <property type="project" value="UniProtKB-UniRule"/>
</dbReference>
<dbReference type="CDD" id="cd01421">
    <property type="entry name" value="IMPCH"/>
    <property type="match status" value="1"/>
</dbReference>
<dbReference type="FunFam" id="3.40.140.20:FF:000001">
    <property type="entry name" value="Bifunctional purine biosynthesis protein PurH"/>
    <property type="match status" value="1"/>
</dbReference>
<dbReference type="FunFam" id="3.40.140.20:FF:000002">
    <property type="entry name" value="Bifunctional purine biosynthesis protein PurH"/>
    <property type="match status" value="1"/>
</dbReference>
<dbReference type="FunFam" id="3.40.50.1380:FF:000001">
    <property type="entry name" value="Bifunctional purine biosynthesis protein PurH"/>
    <property type="match status" value="1"/>
</dbReference>
<dbReference type="Gene3D" id="3.40.140.20">
    <property type="match status" value="2"/>
</dbReference>
<dbReference type="Gene3D" id="3.40.50.1380">
    <property type="entry name" value="Methylglyoxal synthase-like domain"/>
    <property type="match status" value="1"/>
</dbReference>
<dbReference type="HAMAP" id="MF_00139">
    <property type="entry name" value="PurH"/>
    <property type="match status" value="1"/>
</dbReference>
<dbReference type="InterPro" id="IPR024051">
    <property type="entry name" value="AICAR_Tfase_dup_dom_sf"/>
</dbReference>
<dbReference type="InterPro" id="IPR016193">
    <property type="entry name" value="Cytidine_deaminase-like"/>
</dbReference>
<dbReference type="InterPro" id="IPR011607">
    <property type="entry name" value="MGS-like_dom"/>
</dbReference>
<dbReference type="InterPro" id="IPR036914">
    <property type="entry name" value="MGS-like_dom_sf"/>
</dbReference>
<dbReference type="InterPro" id="IPR002695">
    <property type="entry name" value="PurH-like"/>
</dbReference>
<dbReference type="NCBIfam" id="NF002049">
    <property type="entry name" value="PRK00881.1"/>
    <property type="match status" value="1"/>
</dbReference>
<dbReference type="NCBIfam" id="TIGR00355">
    <property type="entry name" value="purH"/>
    <property type="match status" value="1"/>
</dbReference>
<dbReference type="PANTHER" id="PTHR11692:SF0">
    <property type="entry name" value="BIFUNCTIONAL PURINE BIOSYNTHESIS PROTEIN ATIC"/>
    <property type="match status" value="1"/>
</dbReference>
<dbReference type="PANTHER" id="PTHR11692">
    <property type="entry name" value="BIFUNCTIONAL PURINE BIOSYNTHESIS PROTEIN PURH"/>
    <property type="match status" value="1"/>
</dbReference>
<dbReference type="Pfam" id="PF01808">
    <property type="entry name" value="AICARFT_IMPCHas"/>
    <property type="match status" value="1"/>
</dbReference>
<dbReference type="Pfam" id="PF02142">
    <property type="entry name" value="MGS"/>
    <property type="match status" value="1"/>
</dbReference>
<dbReference type="PIRSF" id="PIRSF000414">
    <property type="entry name" value="AICARFT_IMPCHas"/>
    <property type="match status" value="1"/>
</dbReference>
<dbReference type="SMART" id="SM00798">
    <property type="entry name" value="AICARFT_IMPCHas"/>
    <property type="match status" value="1"/>
</dbReference>
<dbReference type="SMART" id="SM00851">
    <property type="entry name" value="MGS"/>
    <property type="match status" value="1"/>
</dbReference>
<dbReference type="SUPFAM" id="SSF53927">
    <property type="entry name" value="Cytidine deaminase-like"/>
    <property type="match status" value="1"/>
</dbReference>
<dbReference type="SUPFAM" id="SSF52335">
    <property type="entry name" value="Methylglyoxal synthase-like"/>
    <property type="match status" value="1"/>
</dbReference>
<dbReference type="PROSITE" id="PS51855">
    <property type="entry name" value="MGS"/>
    <property type="match status" value="1"/>
</dbReference>
<name>PUR9_BURTA</name>
<feature type="chain" id="PRO_1000018863" description="Bifunctional purine biosynthesis protein PurH">
    <location>
        <begin position="1"/>
        <end position="521"/>
    </location>
</feature>
<feature type="domain" description="MGS-like" evidence="2">
    <location>
        <begin position="1"/>
        <end position="145"/>
    </location>
</feature>
<comment type="catalytic activity">
    <reaction evidence="1">
        <text>(6R)-10-formyltetrahydrofolate + 5-amino-1-(5-phospho-beta-D-ribosyl)imidazole-4-carboxamide = 5-formamido-1-(5-phospho-D-ribosyl)imidazole-4-carboxamide + (6S)-5,6,7,8-tetrahydrofolate</text>
        <dbReference type="Rhea" id="RHEA:22192"/>
        <dbReference type="ChEBI" id="CHEBI:57453"/>
        <dbReference type="ChEBI" id="CHEBI:58467"/>
        <dbReference type="ChEBI" id="CHEBI:58475"/>
        <dbReference type="ChEBI" id="CHEBI:195366"/>
        <dbReference type="EC" id="2.1.2.3"/>
    </reaction>
</comment>
<comment type="catalytic activity">
    <reaction evidence="1">
        <text>IMP + H2O = 5-formamido-1-(5-phospho-D-ribosyl)imidazole-4-carboxamide</text>
        <dbReference type="Rhea" id="RHEA:18445"/>
        <dbReference type="ChEBI" id="CHEBI:15377"/>
        <dbReference type="ChEBI" id="CHEBI:58053"/>
        <dbReference type="ChEBI" id="CHEBI:58467"/>
        <dbReference type="EC" id="3.5.4.10"/>
    </reaction>
</comment>
<comment type="pathway">
    <text evidence="1">Purine metabolism; IMP biosynthesis via de novo pathway; 5-formamido-1-(5-phospho-D-ribosyl)imidazole-4-carboxamide from 5-amino-1-(5-phospho-D-ribosyl)imidazole-4-carboxamide (10-formyl THF route): step 1/1.</text>
</comment>
<comment type="pathway">
    <text evidence="1">Purine metabolism; IMP biosynthesis via de novo pathway; IMP from 5-formamido-1-(5-phospho-D-ribosyl)imidazole-4-carboxamide: step 1/1.</text>
</comment>
<comment type="domain">
    <text evidence="1">The IMP cyclohydrolase activity resides in the N-terminal region.</text>
</comment>
<comment type="similarity">
    <text evidence="1">Belongs to the PurH family.</text>
</comment>
<accession>Q2SZ52</accession>
<sequence length="521" mass="55531">MIKQALISVSDKTGIVDFAKALSGLGVKLLSTGGTAKLLADAGLPVTEVADYTGFPEMLDGRVKTLHPKVHGGILARRDLPEHMQALEAHGIPTIDLLVVNLYPFVQTIAKDDCTLADAIENIDIGGPTMLRSAAKNHRDVTVVVDPADYAVVLDEMKANGNTVGYKTNFRLATKVFAHTAQYDGAITNYLTSLGDDLQHGSRNAYPATLNLAFDKVQDLRYGENPHQSAAFYRDVATPAGALANYRQLQGKELSYNNIADSDAAWECVKTFDAPACVIIKHANPCGVAVGADAGEAYAKAFQTDPTSAFGGIIAFNREVDEVAAQAVAKQFVEVLIAPSFSEAAKQVFAAKQNVRLLEIALGEGHNAFDLKRVGGGLLVQSLDSKNVQPRELRVVTKRHPTPKEMDDLLFAWRVAKYVKSNAIVFCGNGMTLGVGAGQMSRVDSARIASIKAQNAGLTLAGSAVASDAFFPFRDGLDVVVAAGATCVIQPGGSVRDDEVIAAADEHNIAMVMTGVRHFRH</sequence>
<reference key="1">
    <citation type="journal article" date="2005" name="BMC Genomics">
        <title>Bacterial genome adaptation to niches: divergence of the potential virulence genes in three Burkholderia species of different survival strategies.</title>
        <authorList>
            <person name="Kim H.S."/>
            <person name="Schell M.A."/>
            <person name="Yu Y."/>
            <person name="Ulrich R.L."/>
            <person name="Sarria S.H."/>
            <person name="Nierman W.C."/>
            <person name="DeShazer D."/>
        </authorList>
    </citation>
    <scope>NUCLEOTIDE SEQUENCE [LARGE SCALE GENOMIC DNA]</scope>
    <source>
        <strain>ATCC 700388 / DSM 13276 / CCUG 48851 / CIP 106301 / E264</strain>
    </source>
</reference>
<organism>
    <name type="scientific">Burkholderia thailandensis (strain ATCC 700388 / DSM 13276 / CCUG 48851 / CIP 106301 / E264)</name>
    <dbReference type="NCBI Taxonomy" id="271848"/>
    <lineage>
        <taxon>Bacteria</taxon>
        <taxon>Pseudomonadati</taxon>
        <taxon>Pseudomonadota</taxon>
        <taxon>Betaproteobacteria</taxon>
        <taxon>Burkholderiales</taxon>
        <taxon>Burkholderiaceae</taxon>
        <taxon>Burkholderia</taxon>
        <taxon>pseudomallei group</taxon>
    </lineage>
</organism>